<dbReference type="EMBL" id="CP000758">
    <property type="protein sequence ID" value="ABS14671.1"/>
    <property type="molecule type" value="Genomic_DNA"/>
</dbReference>
<dbReference type="RefSeq" id="WP_002964363.1">
    <property type="nucleotide sequence ID" value="NC_009667.1"/>
</dbReference>
<dbReference type="SMR" id="A6X0B7"/>
<dbReference type="STRING" id="439375.Oant_1955"/>
<dbReference type="GeneID" id="97533523"/>
<dbReference type="KEGG" id="oan:Oant_1955"/>
<dbReference type="eggNOG" id="COG0051">
    <property type="taxonomic scope" value="Bacteria"/>
</dbReference>
<dbReference type="HOGENOM" id="CLU_122625_1_3_5"/>
<dbReference type="PhylomeDB" id="A6X0B7"/>
<dbReference type="Proteomes" id="UP000002301">
    <property type="component" value="Chromosome 1"/>
</dbReference>
<dbReference type="GO" id="GO:1990904">
    <property type="term" value="C:ribonucleoprotein complex"/>
    <property type="evidence" value="ECO:0007669"/>
    <property type="project" value="UniProtKB-KW"/>
</dbReference>
<dbReference type="GO" id="GO:0005840">
    <property type="term" value="C:ribosome"/>
    <property type="evidence" value="ECO:0007669"/>
    <property type="project" value="UniProtKB-KW"/>
</dbReference>
<dbReference type="GO" id="GO:0003735">
    <property type="term" value="F:structural constituent of ribosome"/>
    <property type="evidence" value="ECO:0007669"/>
    <property type="project" value="InterPro"/>
</dbReference>
<dbReference type="GO" id="GO:0000049">
    <property type="term" value="F:tRNA binding"/>
    <property type="evidence" value="ECO:0007669"/>
    <property type="project" value="UniProtKB-UniRule"/>
</dbReference>
<dbReference type="GO" id="GO:0006412">
    <property type="term" value="P:translation"/>
    <property type="evidence" value="ECO:0007669"/>
    <property type="project" value="UniProtKB-UniRule"/>
</dbReference>
<dbReference type="FunFam" id="3.30.70.600:FF:000001">
    <property type="entry name" value="30S ribosomal protein S10"/>
    <property type="match status" value="1"/>
</dbReference>
<dbReference type="Gene3D" id="3.30.70.600">
    <property type="entry name" value="Ribosomal protein S10 domain"/>
    <property type="match status" value="1"/>
</dbReference>
<dbReference type="HAMAP" id="MF_00508">
    <property type="entry name" value="Ribosomal_uS10"/>
    <property type="match status" value="1"/>
</dbReference>
<dbReference type="InterPro" id="IPR001848">
    <property type="entry name" value="Ribosomal_uS10"/>
</dbReference>
<dbReference type="InterPro" id="IPR018268">
    <property type="entry name" value="Ribosomal_uS10_CS"/>
</dbReference>
<dbReference type="InterPro" id="IPR027486">
    <property type="entry name" value="Ribosomal_uS10_dom"/>
</dbReference>
<dbReference type="InterPro" id="IPR036838">
    <property type="entry name" value="Ribosomal_uS10_dom_sf"/>
</dbReference>
<dbReference type="NCBIfam" id="NF001861">
    <property type="entry name" value="PRK00596.1"/>
    <property type="match status" value="1"/>
</dbReference>
<dbReference type="NCBIfam" id="TIGR01049">
    <property type="entry name" value="rpsJ_bact"/>
    <property type="match status" value="1"/>
</dbReference>
<dbReference type="PANTHER" id="PTHR11700">
    <property type="entry name" value="30S RIBOSOMAL PROTEIN S10 FAMILY MEMBER"/>
    <property type="match status" value="1"/>
</dbReference>
<dbReference type="Pfam" id="PF00338">
    <property type="entry name" value="Ribosomal_S10"/>
    <property type="match status" value="1"/>
</dbReference>
<dbReference type="PRINTS" id="PR00971">
    <property type="entry name" value="RIBOSOMALS10"/>
</dbReference>
<dbReference type="SMART" id="SM01403">
    <property type="entry name" value="Ribosomal_S10"/>
    <property type="match status" value="1"/>
</dbReference>
<dbReference type="SUPFAM" id="SSF54999">
    <property type="entry name" value="Ribosomal protein S10"/>
    <property type="match status" value="1"/>
</dbReference>
<dbReference type="PROSITE" id="PS00361">
    <property type="entry name" value="RIBOSOMAL_S10"/>
    <property type="match status" value="1"/>
</dbReference>
<name>RS10_BRUA4</name>
<feature type="chain" id="PRO_1000015071" description="Small ribosomal subunit protein uS10">
    <location>
        <begin position="1"/>
        <end position="102"/>
    </location>
</feature>
<gene>
    <name evidence="1" type="primary">rpsJ</name>
    <name type="ordered locus">Oant_1955</name>
</gene>
<organism>
    <name type="scientific">Brucella anthropi (strain ATCC 49188 / DSM 6882 / CCUG 24695 / JCM 21032 / LMG 3331 / NBRC 15819 / NCTC 12168 / Alc 37)</name>
    <name type="common">Ochrobactrum anthropi</name>
    <dbReference type="NCBI Taxonomy" id="439375"/>
    <lineage>
        <taxon>Bacteria</taxon>
        <taxon>Pseudomonadati</taxon>
        <taxon>Pseudomonadota</taxon>
        <taxon>Alphaproteobacteria</taxon>
        <taxon>Hyphomicrobiales</taxon>
        <taxon>Brucellaceae</taxon>
        <taxon>Brucella/Ochrobactrum group</taxon>
        <taxon>Brucella</taxon>
    </lineage>
</organism>
<sequence>MNGQNIRIRLKAFDHRILDASTREIVSTAKRTGANVRGPIPLPTRIEKFTVNRSPHIDKKSREQFEMRTHKRLLDIVDPTPQTVDALMKLDLSAGVDVEIKL</sequence>
<keyword id="KW-1185">Reference proteome</keyword>
<keyword id="KW-0687">Ribonucleoprotein</keyword>
<keyword id="KW-0689">Ribosomal protein</keyword>
<protein>
    <recommendedName>
        <fullName evidence="1">Small ribosomal subunit protein uS10</fullName>
    </recommendedName>
    <alternativeName>
        <fullName evidence="2">30S ribosomal protein S10</fullName>
    </alternativeName>
</protein>
<comment type="function">
    <text evidence="1">Involved in the binding of tRNA to the ribosomes.</text>
</comment>
<comment type="subunit">
    <text evidence="1">Part of the 30S ribosomal subunit.</text>
</comment>
<comment type="similarity">
    <text evidence="1">Belongs to the universal ribosomal protein uS10 family.</text>
</comment>
<reference key="1">
    <citation type="journal article" date="2011" name="J. Bacteriol.">
        <title>Genome of Ochrobactrum anthropi ATCC 49188 T, a versatile opportunistic pathogen and symbiont of several eukaryotic hosts.</title>
        <authorList>
            <person name="Chain P.S."/>
            <person name="Lang D.M."/>
            <person name="Comerci D.J."/>
            <person name="Malfatti S.A."/>
            <person name="Vergez L.M."/>
            <person name="Shin M."/>
            <person name="Ugalde R.A."/>
            <person name="Garcia E."/>
            <person name="Tolmasky M.E."/>
        </authorList>
    </citation>
    <scope>NUCLEOTIDE SEQUENCE [LARGE SCALE GENOMIC DNA]</scope>
    <source>
        <strain>ATCC 49188 / DSM 6882 / CCUG 24695 / JCM 21032 / LMG 3331 / NBRC 15819 / NCTC 12168 / Alc 37</strain>
    </source>
</reference>
<evidence type="ECO:0000255" key="1">
    <source>
        <dbReference type="HAMAP-Rule" id="MF_00508"/>
    </source>
</evidence>
<evidence type="ECO:0000305" key="2"/>
<proteinExistence type="inferred from homology"/>
<accession>A6X0B7</accession>